<organism>
    <name type="scientific">Lactiplantibacillus plantarum (strain ATCC BAA-793 / NCIMB 8826 / WCFS1)</name>
    <name type="common">Lactobacillus plantarum</name>
    <dbReference type="NCBI Taxonomy" id="220668"/>
    <lineage>
        <taxon>Bacteria</taxon>
        <taxon>Bacillati</taxon>
        <taxon>Bacillota</taxon>
        <taxon>Bacilli</taxon>
        <taxon>Lactobacillales</taxon>
        <taxon>Lactobacillaceae</taxon>
        <taxon>Lactiplantibacillus</taxon>
    </lineage>
</organism>
<feature type="chain" id="PRO_0000337921" description="Cell cycle protein GpsB">
    <location>
        <begin position="1"/>
        <end position="113"/>
    </location>
</feature>
<feature type="coiled-coil region" evidence="1">
    <location>
        <begin position="32"/>
        <end position="71"/>
    </location>
</feature>
<comment type="function">
    <text evidence="1">Divisome component that associates with the complex late in its assembly, after the Z-ring is formed, and is dependent on DivIC and PBP2B for its recruitment to the divisome. Together with EzrA, is a key component of the system that regulates PBP1 localization during cell cycle progression. Its main role could be the removal of PBP1 from the cell pole after pole maturation is completed. Also contributes to the recruitment of PBP1 to the division complex. Not essential for septum formation.</text>
</comment>
<comment type="subunit">
    <text evidence="1">Forms polymers through the coiled coil domains. Interacts with PBP1, MreC and EzrA.</text>
</comment>
<comment type="subcellular location">
    <subcellularLocation>
        <location evidence="1">Cytoplasm</location>
    </subcellularLocation>
    <text evidence="1">Shuttles between the lateral wall and the division site in a cell cycle-dependent manner.</text>
</comment>
<comment type="similarity">
    <text evidence="1">Belongs to the GpsB family.</text>
</comment>
<proteinExistence type="inferred from homology"/>
<accession>Q88W95</accession>
<accession>F9UPA8</accession>
<sequence>MAKRNFTPKDILQKEFKPKMRGYDPADVDGFLDNVIKDYESFTKDNQQLSDENERLRAKVDELTKQVAVGATSPSSQPTSTVTNMDILKRLSNLERHVFGAQLDNNQNESHRL</sequence>
<gene>
    <name evidence="1" type="primary">gpsB</name>
    <name type="ordered locus">lp_1754</name>
</gene>
<protein>
    <recommendedName>
        <fullName evidence="1">Cell cycle protein GpsB</fullName>
    </recommendedName>
    <alternativeName>
        <fullName evidence="1">Guiding PBP1-shuttling protein</fullName>
    </alternativeName>
</protein>
<reference key="1">
    <citation type="journal article" date="2003" name="Proc. Natl. Acad. Sci. U.S.A.">
        <title>Complete genome sequence of Lactobacillus plantarum WCFS1.</title>
        <authorList>
            <person name="Kleerebezem M."/>
            <person name="Boekhorst J."/>
            <person name="van Kranenburg R."/>
            <person name="Molenaar D."/>
            <person name="Kuipers O.P."/>
            <person name="Leer R."/>
            <person name="Tarchini R."/>
            <person name="Peters S.A."/>
            <person name="Sandbrink H.M."/>
            <person name="Fiers M.W.E.J."/>
            <person name="Stiekema W."/>
            <person name="Klein Lankhorst R.M."/>
            <person name="Bron P.A."/>
            <person name="Hoffer S.M."/>
            <person name="Nierop Groot M.N."/>
            <person name="Kerkhoven R."/>
            <person name="De Vries M."/>
            <person name="Ursing B."/>
            <person name="De Vos W.M."/>
            <person name="Siezen R.J."/>
        </authorList>
    </citation>
    <scope>NUCLEOTIDE SEQUENCE [LARGE SCALE GENOMIC DNA]</scope>
    <source>
        <strain>ATCC BAA-793 / NCIMB 8826 / WCFS1</strain>
    </source>
</reference>
<reference key="2">
    <citation type="journal article" date="2012" name="J. Bacteriol.">
        <title>Complete resequencing and reannotation of the Lactobacillus plantarum WCFS1 genome.</title>
        <authorList>
            <person name="Siezen R.J."/>
            <person name="Francke C."/>
            <person name="Renckens B."/>
            <person name="Boekhorst J."/>
            <person name="Wels M."/>
            <person name="Kleerebezem M."/>
            <person name="van Hijum S.A."/>
        </authorList>
    </citation>
    <scope>NUCLEOTIDE SEQUENCE [LARGE SCALE GENOMIC DNA]</scope>
    <scope>GENOME REANNOTATION</scope>
    <source>
        <strain>ATCC BAA-793 / NCIMB 8826 / WCFS1</strain>
    </source>
</reference>
<evidence type="ECO:0000255" key="1">
    <source>
        <dbReference type="HAMAP-Rule" id="MF_02011"/>
    </source>
</evidence>
<name>GPSB_LACPL</name>
<dbReference type="EMBL" id="AL935263">
    <property type="protein sequence ID" value="CCC79047.1"/>
    <property type="molecule type" value="Genomic_DNA"/>
</dbReference>
<dbReference type="RefSeq" id="WP_003638751.1">
    <property type="nucleotide sequence ID" value="NC_004567.2"/>
</dbReference>
<dbReference type="RefSeq" id="YP_004889561.1">
    <property type="nucleotide sequence ID" value="NC_004567.2"/>
</dbReference>
<dbReference type="SMR" id="Q88W95"/>
<dbReference type="STRING" id="220668.lp_1754"/>
<dbReference type="EnsemblBacteria" id="CCC79047">
    <property type="protein sequence ID" value="CCC79047"/>
    <property type="gene ID" value="lp_1754"/>
</dbReference>
<dbReference type="GeneID" id="89669110"/>
<dbReference type="KEGG" id="lpl:lp_1754"/>
<dbReference type="PATRIC" id="fig|220668.9.peg.1480"/>
<dbReference type="eggNOG" id="COG3599">
    <property type="taxonomic scope" value="Bacteria"/>
</dbReference>
<dbReference type="HOGENOM" id="CLU_140309_1_0_9"/>
<dbReference type="OrthoDB" id="389699at2"/>
<dbReference type="PhylomeDB" id="Q88W95"/>
<dbReference type="Proteomes" id="UP000000432">
    <property type="component" value="Chromosome"/>
</dbReference>
<dbReference type="GO" id="GO:0005737">
    <property type="term" value="C:cytoplasm"/>
    <property type="evidence" value="ECO:0007669"/>
    <property type="project" value="UniProtKB-SubCell"/>
</dbReference>
<dbReference type="GO" id="GO:0051301">
    <property type="term" value="P:cell division"/>
    <property type="evidence" value="ECO:0007669"/>
    <property type="project" value="UniProtKB-UniRule"/>
</dbReference>
<dbReference type="GO" id="GO:0008360">
    <property type="term" value="P:regulation of cell shape"/>
    <property type="evidence" value="ECO:0007669"/>
    <property type="project" value="UniProtKB-UniRule"/>
</dbReference>
<dbReference type="Gene3D" id="6.10.250.660">
    <property type="match status" value="1"/>
</dbReference>
<dbReference type="HAMAP" id="MF_02011">
    <property type="entry name" value="GpsB"/>
    <property type="match status" value="1"/>
</dbReference>
<dbReference type="InterPro" id="IPR011229">
    <property type="entry name" value="Cell_cycle_GpsB"/>
</dbReference>
<dbReference type="InterPro" id="IPR019933">
    <property type="entry name" value="DivIVA_domain"/>
</dbReference>
<dbReference type="InterPro" id="IPR007793">
    <property type="entry name" value="DivIVA_fam"/>
</dbReference>
<dbReference type="NCBIfam" id="TIGR03544">
    <property type="entry name" value="DivI1A_domain"/>
    <property type="match status" value="1"/>
</dbReference>
<dbReference type="NCBIfam" id="NF010725">
    <property type="entry name" value="PRK14127.1"/>
    <property type="match status" value="1"/>
</dbReference>
<dbReference type="PANTHER" id="PTHR35794:SF1">
    <property type="entry name" value="CELL CYCLE PROTEIN GPSB"/>
    <property type="match status" value="1"/>
</dbReference>
<dbReference type="PANTHER" id="PTHR35794">
    <property type="entry name" value="CELL DIVISION PROTEIN DIVIVA"/>
    <property type="match status" value="1"/>
</dbReference>
<dbReference type="Pfam" id="PF05103">
    <property type="entry name" value="DivIVA"/>
    <property type="match status" value="1"/>
</dbReference>
<dbReference type="PIRSF" id="PIRSF029938">
    <property type="entry name" value="UCP029938"/>
    <property type="match status" value="1"/>
</dbReference>
<keyword id="KW-0131">Cell cycle</keyword>
<keyword id="KW-0132">Cell division</keyword>
<keyword id="KW-0133">Cell shape</keyword>
<keyword id="KW-0175">Coiled coil</keyword>
<keyword id="KW-0963">Cytoplasm</keyword>
<keyword id="KW-1185">Reference proteome</keyword>